<organism>
    <name type="scientific">Bacillus anthracis (strain A0248)</name>
    <dbReference type="NCBI Taxonomy" id="592021"/>
    <lineage>
        <taxon>Bacteria</taxon>
        <taxon>Bacillati</taxon>
        <taxon>Bacillota</taxon>
        <taxon>Bacilli</taxon>
        <taxon>Bacillales</taxon>
        <taxon>Bacillaceae</taxon>
        <taxon>Bacillus</taxon>
        <taxon>Bacillus cereus group</taxon>
    </lineage>
</organism>
<comment type="function">
    <text evidence="1">Involved in the biosynthesis of isoprenoids. Catalyzes the 1,3-allylic rearrangement of the homoallylic substrate isopentenyl (IPP) to its allylic isomer, dimethylallyl diphosphate (DMAPP).</text>
</comment>
<comment type="catalytic activity">
    <reaction evidence="1">
        <text>isopentenyl diphosphate = dimethylallyl diphosphate</text>
        <dbReference type="Rhea" id="RHEA:23284"/>
        <dbReference type="ChEBI" id="CHEBI:57623"/>
        <dbReference type="ChEBI" id="CHEBI:128769"/>
        <dbReference type="EC" id="5.3.3.2"/>
    </reaction>
</comment>
<comment type="cofactor">
    <cofactor evidence="1">
        <name>FMN</name>
        <dbReference type="ChEBI" id="CHEBI:58210"/>
    </cofactor>
</comment>
<comment type="cofactor">
    <cofactor evidence="1">
        <name>NADPH</name>
        <dbReference type="ChEBI" id="CHEBI:57783"/>
    </cofactor>
</comment>
<comment type="cofactor">
    <cofactor evidence="1">
        <name>Mg(2+)</name>
        <dbReference type="ChEBI" id="CHEBI:18420"/>
    </cofactor>
</comment>
<comment type="subunit">
    <text evidence="1">Homooctamer. Dimer of tetramers.</text>
</comment>
<comment type="subcellular location">
    <subcellularLocation>
        <location evidence="1">Cytoplasm</location>
    </subcellularLocation>
</comment>
<comment type="similarity">
    <text evidence="1">Belongs to the IPP isomerase type 2 family.</text>
</comment>
<protein>
    <recommendedName>
        <fullName evidence="1">Isopentenyl-diphosphate delta-isomerase</fullName>
        <shortName evidence="1">IPP isomerase</shortName>
        <ecNumber evidence="1">5.3.3.2</ecNumber>
    </recommendedName>
    <alternativeName>
        <fullName evidence="1">Isopentenyl diphosphate:dimethylallyl diphosphate isomerase</fullName>
    </alternativeName>
    <alternativeName>
        <fullName evidence="1">Isopentenyl pyrophosphate isomerase</fullName>
    </alternativeName>
    <alternativeName>
        <fullName evidence="1">Type 2 isopentenyl diphosphate isomerase</fullName>
        <shortName evidence="1">IDI-2</shortName>
    </alternativeName>
</protein>
<feature type="chain" id="PRO_1000133426" description="Isopentenyl-diphosphate delta-isomerase">
    <location>
        <begin position="1"/>
        <end position="349"/>
    </location>
</feature>
<feature type="binding site" evidence="1">
    <location>
        <begin position="6"/>
        <end position="7"/>
    </location>
    <ligand>
        <name>substrate</name>
    </ligand>
</feature>
<feature type="binding site" evidence="1">
    <location>
        <begin position="62"/>
        <end position="64"/>
    </location>
    <ligand>
        <name>FMN</name>
        <dbReference type="ChEBI" id="CHEBI:58210"/>
    </ligand>
</feature>
<feature type="binding site" evidence="1">
    <location>
        <position position="93"/>
    </location>
    <ligand>
        <name>FMN</name>
        <dbReference type="ChEBI" id="CHEBI:58210"/>
    </ligand>
</feature>
<feature type="binding site" evidence="1">
    <location>
        <position position="122"/>
    </location>
    <ligand>
        <name>FMN</name>
        <dbReference type="ChEBI" id="CHEBI:58210"/>
    </ligand>
</feature>
<feature type="binding site" evidence="1">
    <location>
        <position position="152"/>
    </location>
    <ligand>
        <name>substrate</name>
    </ligand>
</feature>
<feature type="binding site" evidence="1">
    <location>
        <position position="153"/>
    </location>
    <ligand>
        <name>Mg(2+)</name>
        <dbReference type="ChEBI" id="CHEBI:18420"/>
    </ligand>
</feature>
<feature type="binding site" evidence="1">
    <location>
        <position position="184"/>
    </location>
    <ligand>
        <name>FMN</name>
        <dbReference type="ChEBI" id="CHEBI:58210"/>
    </ligand>
</feature>
<feature type="binding site" evidence="1">
    <location>
        <position position="214"/>
    </location>
    <ligand>
        <name>FMN</name>
        <dbReference type="ChEBI" id="CHEBI:58210"/>
    </ligand>
</feature>
<feature type="binding site" evidence="1">
    <location>
        <begin position="258"/>
        <end position="259"/>
    </location>
    <ligand>
        <name>FMN</name>
        <dbReference type="ChEBI" id="CHEBI:58210"/>
    </ligand>
</feature>
<feature type="binding site" evidence="1">
    <location>
        <begin position="280"/>
        <end position="281"/>
    </location>
    <ligand>
        <name>FMN</name>
        <dbReference type="ChEBI" id="CHEBI:58210"/>
    </ligand>
</feature>
<dbReference type="EC" id="5.3.3.2" evidence="1"/>
<dbReference type="EMBL" id="CP001598">
    <property type="protein sequence ID" value="ACQ49799.1"/>
    <property type="molecule type" value="Genomic_DNA"/>
</dbReference>
<dbReference type="RefSeq" id="WP_000251061.1">
    <property type="nucleotide sequence ID" value="NC_012659.1"/>
</dbReference>
<dbReference type="SMR" id="C3P586"/>
<dbReference type="GeneID" id="45021495"/>
<dbReference type="KEGG" id="bai:BAA_1589"/>
<dbReference type="HOGENOM" id="CLU_065515_0_0_9"/>
<dbReference type="GO" id="GO:0005737">
    <property type="term" value="C:cytoplasm"/>
    <property type="evidence" value="ECO:0007669"/>
    <property type="project" value="UniProtKB-SubCell"/>
</dbReference>
<dbReference type="GO" id="GO:0010181">
    <property type="term" value="F:FMN binding"/>
    <property type="evidence" value="ECO:0007669"/>
    <property type="project" value="UniProtKB-UniRule"/>
</dbReference>
<dbReference type="GO" id="GO:0004452">
    <property type="term" value="F:isopentenyl-diphosphate delta-isomerase activity"/>
    <property type="evidence" value="ECO:0007669"/>
    <property type="project" value="UniProtKB-UniRule"/>
</dbReference>
<dbReference type="GO" id="GO:0000287">
    <property type="term" value="F:magnesium ion binding"/>
    <property type="evidence" value="ECO:0007669"/>
    <property type="project" value="UniProtKB-UniRule"/>
</dbReference>
<dbReference type="GO" id="GO:0070402">
    <property type="term" value="F:NADPH binding"/>
    <property type="evidence" value="ECO:0007669"/>
    <property type="project" value="UniProtKB-UniRule"/>
</dbReference>
<dbReference type="GO" id="GO:0016491">
    <property type="term" value="F:oxidoreductase activity"/>
    <property type="evidence" value="ECO:0007669"/>
    <property type="project" value="InterPro"/>
</dbReference>
<dbReference type="GO" id="GO:0008299">
    <property type="term" value="P:isoprenoid biosynthetic process"/>
    <property type="evidence" value="ECO:0007669"/>
    <property type="project" value="UniProtKB-UniRule"/>
</dbReference>
<dbReference type="CDD" id="cd02811">
    <property type="entry name" value="IDI-2_FMN"/>
    <property type="match status" value="1"/>
</dbReference>
<dbReference type="FunFam" id="3.20.20.70:FF:000115">
    <property type="entry name" value="Isopentenyl-diphosphate delta-isomerase"/>
    <property type="match status" value="1"/>
</dbReference>
<dbReference type="Gene3D" id="3.20.20.70">
    <property type="entry name" value="Aldolase class I"/>
    <property type="match status" value="1"/>
</dbReference>
<dbReference type="HAMAP" id="MF_00354">
    <property type="entry name" value="Idi_2"/>
    <property type="match status" value="1"/>
</dbReference>
<dbReference type="InterPro" id="IPR013785">
    <property type="entry name" value="Aldolase_TIM"/>
</dbReference>
<dbReference type="InterPro" id="IPR000262">
    <property type="entry name" value="FMN-dep_DH"/>
</dbReference>
<dbReference type="InterPro" id="IPR011179">
    <property type="entry name" value="IPdP_isomerase"/>
</dbReference>
<dbReference type="NCBIfam" id="TIGR02151">
    <property type="entry name" value="IPP_isom_2"/>
    <property type="match status" value="1"/>
</dbReference>
<dbReference type="PANTHER" id="PTHR43665">
    <property type="entry name" value="ISOPENTENYL-DIPHOSPHATE DELTA-ISOMERASE"/>
    <property type="match status" value="1"/>
</dbReference>
<dbReference type="PANTHER" id="PTHR43665:SF1">
    <property type="entry name" value="ISOPENTENYL-DIPHOSPHATE DELTA-ISOMERASE"/>
    <property type="match status" value="1"/>
</dbReference>
<dbReference type="Pfam" id="PF01070">
    <property type="entry name" value="FMN_dh"/>
    <property type="match status" value="1"/>
</dbReference>
<dbReference type="PIRSF" id="PIRSF003314">
    <property type="entry name" value="IPP_isomerase"/>
    <property type="match status" value="1"/>
</dbReference>
<dbReference type="SMART" id="SM01240">
    <property type="entry name" value="IMPDH"/>
    <property type="match status" value="1"/>
</dbReference>
<dbReference type="SUPFAM" id="SSF51395">
    <property type="entry name" value="FMN-linked oxidoreductases"/>
    <property type="match status" value="1"/>
</dbReference>
<accession>C3P586</accession>
<keyword id="KW-0963">Cytoplasm</keyword>
<keyword id="KW-0285">Flavoprotein</keyword>
<keyword id="KW-0288">FMN</keyword>
<keyword id="KW-0413">Isomerase</keyword>
<keyword id="KW-0414">Isoprene biosynthesis</keyword>
<keyword id="KW-0460">Magnesium</keyword>
<keyword id="KW-0479">Metal-binding</keyword>
<keyword id="KW-0521">NADP</keyword>
<gene>
    <name evidence="1" type="primary">fni</name>
    <name type="ordered locus">BAA_1589</name>
</gene>
<proteinExistence type="inferred from homology"/>
<sequence length="349" mass="38186">MVRAKRKLDHIEYALSTGQSRTHGFHDIEFVHQSLPNSSYETITCETKIGELSLSSPIFINAMTGGGGEKTLHINEQLAYVAKHHNLAMAVGSQMAALKDESEAASYKIIRKVNPNGIFFANLGSEATVEQAERAVDMVGANALQIHLNVIQELTMPEGDRDFTGVLQRIEEIVLNSKVPVIVKEVGFGMSKETMQQLASVGVTAIDIGGQGGTNFAAVENERRQRMLSYFNNWGIQTATSIIEATSTNNNLSFIASGGIQTALDVAKAIALGANTTAFAGYFLRILMEDGIEKLVDEIDLLHTDLKFIMTALGAKTIEELQSVPLVIKGETYHWLTQRGIDTTHYSRR</sequence>
<name>IDI2_BACAA</name>
<reference key="1">
    <citation type="submission" date="2009-04" db="EMBL/GenBank/DDBJ databases">
        <title>Genome sequence of Bacillus anthracis A0248.</title>
        <authorList>
            <person name="Dodson R.J."/>
            <person name="Munk A.C."/>
            <person name="Bruce D."/>
            <person name="Detter C."/>
            <person name="Tapia R."/>
            <person name="Sutton G."/>
            <person name="Sims D."/>
            <person name="Brettin T."/>
        </authorList>
    </citation>
    <scope>NUCLEOTIDE SEQUENCE [LARGE SCALE GENOMIC DNA]</scope>
    <source>
        <strain>A0248</strain>
    </source>
</reference>
<evidence type="ECO:0000255" key="1">
    <source>
        <dbReference type="HAMAP-Rule" id="MF_00354"/>
    </source>
</evidence>